<organism>
    <name type="scientific">Eremothecium gossypii (strain ATCC 10895 / CBS 109.51 / FGSC 9923 / NRRL Y-1056)</name>
    <name type="common">Yeast</name>
    <name type="synonym">Ashbya gossypii</name>
    <dbReference type="NCBI Taxonomy" id="284811"/>
    <lineage>
        <taxon>Eukaryota</taxon>
        <taxon>Fungi</taxon>
        <taxon>Dikarya</taxon>
        <taxon>Ascomycota</taxon>
        <taxon>Saccharomycotina</taxon>
        <taxon>Saccharomycetes</taxon>
        <taxon>Saccharomycetales</taxon>
        <taxon>Saccharomycetaceae</taxon>
        <taxon>Eremothecium</taxon>
    </lineage>
</organism>
<accession>Q74ZC1</accession>
<evidence type="ECO:0000250" key="1"/>
<evidence type="ECO:0000255" key="2">
    <source>
        <dbReference type="PROSITE-ProRule" id="PRU00541"/>
    </source>
</evidence>
<evidence type="ECO:0000255" key="3">
    <source>
        <dbReference type="PROSITE-ProRule" id="PRU00542"/>
    </source>
</evidence>
<evidence type="ECO:0000256" key="4">
    <source>
        <dbReference type="SAM" id="MobiDB-lite"/>
    </source>
</evidence>
<evidence type="ECO:0000305" key="5"/>
<protein>
    <recommendedName>
        <fullName>ATP-dependent RNA helicase DBP9</fullName>
        <ecNumber>3.6.4.13</ecNumber>
    </recommendedName>
</protein>
<keyword id="KW-0067">ATP-binding</keyword>
<keyword id="KW-0347">Helicase</keyword>
<keyword id="KW-0378">Hydrolase</keyword>
<keyword id="KW-0547">Nucleotide-binding</keyword>
<keyword id="KW-0539">Nucleus</keyword>
<keyword id="KW-1185">Reference proteome</keyword>
<keyword id="KW-0690">Ribosome biogenesis</keyword>
<keyword id="KW-0694">RNA-binding</keyword>
<keyword id="KW-0698">rRNA processing</keyword>
<name>DBP9_EREGS</name>
<dbReference type="EC" id="3.6.4.13"/>
<dbReference type="EMBL" id="AE016820">
    <property type="protein sequence ID" value="AAS54768.1"/>
    <property type="molecule type" value="Genomic_DNA"/>
</dbReference>
<dbReference type="RefSeq" id="NP_986944.1">
    <property type="nucleotide sequence ID" value="NM_212006.2"/>
</dbReference>
<dbReference type="SMR" id="Q74ZC1"/>
<dbReference type="FunCoup" id="Q74ZC1">
    <property type="interactions" value="1055"/>
</dbReference>
<dbReference type="STRING" id="284811.Q74ZC1"/>
<dbReference type="EnsemblFungi" id="AAS54768">
    <property type="protein sequence ID" value="AAS54768"/>
    <property type="gene ID" value="AGOS_AGR278C"/>
</dbReference>
<dbReference type="GeneID" id="4623246"/>
<dbReference type="KEGG" id="ago:AGOS_AGR278C"/>
<dbReference type="eggNOG" id="KOG0346">
    <property type="taxonomic scope" value="Eukaryota"/>
</dbReference>
<dbReference type="HOGENOM" id="CLU_003041_17_1_1"/>
<dbReference type="InParanoid" id="Q74ZC1"/>
<dbReference type="OMA" id="NASEQCV"/>
<dbReference type="OrthoDB" id="1191041at2759"/>
<dbReference type="Proteomes" id="UP000000591">
    <property type="component" value="Chromosome VII"/>
</dbReference>
<dbReference type="GO" id="GO:0005730">
    <property type="term" value="C:nucleolus"/>
    <property type="evidence" value="ECO:0000318"/>
    <property type="project" value="GO_Central"/>
</dbReference>
<dbReference type="GO" id="GO:0005524">
    <property type="term" value="F:ATP binding"/>
    <property type="evidence" value="ECO:0007669"/>
    <property type="project" value="UniProtKB-KW"/>
</dbReference>
<dbReference type="GO" id="GO:0016887">
    <property type="term" value="F:ATP hydrolysis activity"/>
    <property type="evidence" value="ECO:0007669"/>
    <property type="project" value="RHEA"/>
</dbReference>
<dbReference type="GO" id="GO:0003678">
    <property type="term" value="F:DNA helicase activity"/>
    <property type="evidence" value="ECO:0007669"/>
    <property type="project" value="EnsemblFungi"/>
</dbReference>
<dbReference type="GO" id="GO:0033677">
    <property type="term" value="F:DNA/RNA helicase activity"/>
    <property type="evidence" value="ECO:0007669"/>
    <property type="project" value="EnsemblFungi"/>
</dbReference>
<dbReference type="GO" id="GO:0003723">
    <property type="term" value="F:RNA binding"/>
    <property type="evidence" value="ECO:0007669"/>
    <property type="project" value="UniProtKB-KW"/>
</dbReference>
<dbReference type="GO" id="GO:0003724">
    <property type="term" value="F:RNA helicase activity"/>
    <property type="evidence" value="ECO:0007669"/>
    <property type="project" value="UniProtKB-EC"/>
</dbReference>
<dbReference type="GO" id="GO:0000463">
    <property type="term" value="P:maturation of LSU-rRNA from tricistronic rRNA transcript (SSU-rRNA, 5.8S rRNA, LSU-rRNA)"/>
    <property type="evidence" value="ECO:0007669"/>
    <property type="project" value="EnsemblFungi"/>
</dbReference>
<dbReference type="CDD" id="cd17961">
    <property type="entry name" value="DEADc_DDX56"/>
    <property type="match status" value="1"/>
</dbReference>
<dbReference type="CDD" id="cd18787">
    <property type="entry name" value="SF2_C_DEAD"/>
    <property type="match status" value="1"/>
</dbReference>
<dbReference type="Gene3D" id="3.40.50.300">
    <property type="entry name" value="P-loop containing nucleotide triphosphate hydrolases"/>
    <property type="match status" value="2"/>
</dbReference>
<dbReference type="InterPro" id="IPR011545">
    <property type="entry name" value="DEAD/DEAH_box_helicase_dom"/>
</dbReference>
<dbReference type="InterPro" id="IPR050079">
    <property type="entry name" value="DEAD_box_RNA_helicase"/>
</dbReference>
<dbReference type="InterPro" id="IPR014001">
    <property type="entry name" value="Helicase_ATP-bd"/>
</dbReference>
<dbReference type="InterPro" id="IPR001650">
    <property type="entry name" value="Helicase_C-like"/>
</dbReference>
<dbReference type="InterPro" id="IPR027417">
    <property type="entry name" value="P-loop_NTPase"/>
</dbReference>
<dbReference type="InterPro" id="IPR014014">
    <property type="entry name" value="RNA_helicase_DEAD_Q_motif"/>
</dbReference>
<dbReference type="PANTHER" id="PTHR47959">
    <property type="entry name" value="ATP-DEPENDENT RNA HELICASE RHLE-RELATED"/>
    <property type="match status" value="1"/>
</dbReference>
<dbReference type="PANTHER" id="PTHR47959:SF21">
    <property type="entry name" value="DEAD-BOX HELICASE 56"/>
    <property type="match status" value="1"/>
</dbReference>
<dbReference type="Pfam" id="PF00270">
    <property type="entry name" value="DEAD"/>
    <property type="match status" value="1"/>
</dbReference>
<dbReference type="Pfam" id="PF00271">
    <property type="entry name" value="Helicase_C"/>
    <property type="match status" value="2"/>
</dbReference>
<dbReference type="SMART" id="SM00487">
    <property type="entry name" value="DEXDc"/>
    <property type="match status" value="1"/>
</dbReference>
<dbReference type="SMART" id="SM00490">
    <property type="entry name" value="HELICc"/>
    <property type="match status" value="1"/>
</dbReference>
<dbReference type="SUPFAM" id="SSF52540">
    <property type="entry name" value="P-loop containing nucleoside triphosphate hydrolases"/>
    <property type="match status" value="2"/>
</dbReference>
<dbReference type="PROSITE" id="PS51192">
    <property type="entry name" value="HELICASE_ATP_BIND_1"/>
    <property type="match status" value="1"/>
</dbReference>
<dbReference type="PROSITE" id="PS51194">
    <property type="entry name" value="HELICASE_CTER"/>
    <property type="match status" value="1"/>
</dbReference>
<dbReference type="PROSITE" id="PS51195">
    <property type="entry name" value="Q_MOTIF"/>
    <property type="match status" value="1"/>
</dbReference>
<sequence length="595" mass="67582">MSQQTTASSEYLDESKTFSSFQLDLRLQQSLKSSGFHHPTLIQSSAIPLALEQKRDIIAKASTGSGKTLAYLIPVVQTILEHKSTQGADRTTGTLGVVLVPTRELAQQVRVVLEKLVLYCSKDIRLLNISANVDDSVLGPLLAENPEIIISTPSQLVKILEGKHLQTISLRDLRFLVIDEVDLILTFGYQEDLLKISQYLPLKKNLQAFLMSATLNEEIQELKTKFCRSPAILKLNDDEINKNKNKLLQYYVKVSEFDKFLLCYVIFKLSLIKGKTIIFVNTIDRGYRLKLVLEQFGIRSCILNSELPLNSRQHIVDEFNKNVYQLLIATDDNEYIEEEDEETVEAGEEGSEKLEEGGEKLEEITSKTSSTNGKQKIAKKDKEYGASRGVDFQNVSCVLNFDLPTTAKSYVHRIGRTARAGKSGTAISFVVPLKEYGKHKPSMLVTAKKDEKILARVIKQQSKLGFQIEPYNFDVKQIEGFRYRMEDGFRAVTQVAVREARVKELKQELLASEKLKRHFEENPHDLDSLRHDKELHPARVQQHLKRVPDYLLPEAARETGKKIGFVPFHNPKKNRKGKVAKRKPGRKSDPLKNFK</sequence>
<reference key="1">
    <citation type="journal article" date="2004" name="Science">
        <title>The Ashbya gossypii genome as a tool for mapping the ancient Saccharomyces cerevisiae genome.</title>
        <authorList>
            <person name="Dietrich F.S."/>
            <person name="Voegeli S."/>
            <person name="Brachat S."/>
            <person name="Lerch A."/>
            <person name="Gates K."/>
            <person name="Steiner S."/>
            <person name="Mohr C."/>
            <person name="Poehlmann R."/>
            <person name="Luedi P."/>
            <person name="Choi S."/>
            <person name="Wing R.A."/>
            <person name="Flavier A."/>
            <person name="Gaffney T.D."/>
            <person name="Philippsen P."/>
        </authorList>
    </citation>
    <scope>NUCLEOTIDE SEQUENCE [LARGE SCALE GENOMIC DNA]</scope>
    <source>
        <strain>ATCC 10895 / CBS 109.51 / FGSC 9923 / NRRL Y-1056</strain>
    </source>
</reference>
<reference key="2">
    <citation type="journal article" date="2013" name="G3 (Bethesda)">
        <title>Genomes of Ashbya fungi isolated from insects reveal four mating-type loci, numerous translocations, lack of transposons, and distinct gene duplications.</title>
        <authorList>
            <person name="Dietrich F.S."/>
            <person name="Voegeli S."/>
            <person name="Kuo S."/>
            <person name="Philippsen P."/>
        </authorList>
    </citation>
    <scope>GENOME REANNOTATION</scope>
    <source>
        <strain>ATCC 10895 / CBS 109.51 / FGSC 9923 / NRRL Y-1056</strain>
    </source>
</reference>
<feature type="chain" id="PRO_0000227951" description="ATP-dependent RNA helicase DBP9">
    <location>
        <begin position="1"/>
        <end position="595"/>
    </location>
</feature>
<feature type="domain" description="Helicase ATP-binding" evidence="2">
    <location>
        <begin position="48"/>
        <end position="233"/>
    </location>
</feature>
<feature type="domain" description="Helicase C-terminal" evidence="3">
    <location>
        <begin position="246"/>
        <end position="479"/>
    </location>
</feature>
<feature type="region of interest" description="Disordered" evidence="4">
    <location>
        <begin position="340"/>
        <end position="376"/>
    </location>
</feature>
<feature type="region of interest" description="Disordered" evidence="4">
    <location>
        <begin position="562"/>
        <end position="595"/>
    </location>
</feature>
<feature type="short sequence motif" description="Q motif">
    <location>
        <begin position="16"/>
        <end position="44"/>
    </location>
</feature>
<feature type="short sequence motif" description="DEAD box">
    <location>
        <begin position="179"/>
        <end position="182"/>
    </location>
</feature>
<feature type="compositionally biased region" description="Acidic residues" evidence="4">
    <location>
        <begin position="340"/>
        <end position="349"/>
    </location>
</feature>
<feature type="compositionally biased region" description="Basic and acidic residues" evidence="4">
    <location>
        <begin position="350"/>
        <end position="365"/>
    </location>
</feature>
<feature type="compositionally biased region" description="Basic residues" evidence="4">
    <location>
        <begin position="570"/>
        <end position="585"/>
    </location>
</feature>
<feature type="compositionally biased region" description="Basic and acidic residues" evidence="4">
    <location>
        <begin position="586"/>
        <end position="595"/>
    </location>
</feature>
<feature type="binding site" evidence="2">
    <location>
        <begin position="61"/>
        <end position="68"/>
    </location>
    <ligand>
        <name>ATP</name>
        <dbReference type="ChEBI" id="CHEBI:30616"/>
    </ligand>
</feature>
<comment type="function">
    <text evidence="1">ATP-binding RNA helicase involved in the biogenesis of 60S ribosomal subunits and is required for the normal formation of 25S and 5.8S rRNAs.</text>
</comment>
<comment type="catalytic activity">
    <reaction>
        <text>ATP + H2O = ADP + phosphate + H(+)</text>
        <dbReference type="Rhea" id="RHEA:13065"/>
        <dbReference type="ChEBI" id="CHEBI:15377"/>
        <dbReference type="ChEBI" id="CHEBI:15378"/>
        <dbReference type="ChEBI" id="CHEBI:30616"/>
        <dbReference type="ChEBI" id="CHEBI:43474"/>
        <dbReference type="ChEBI" id="CHEBI:456216"/>
        <dbReference type="EC" id="3.6.4.13"/>
    </reaction>
</comment>
<comment type="subcellular location">
    <subcellularLocation>
        <location evidence="1">Nucleus</location>
        <location evidence="1">Nucleolus</location>
    </subcellularLocation>
</comment>
<comment type="domain">
    <text>The Q motif is unique to and characteristic of the DEAD box family of RNA helicases and controls ATP binding and hydrolysis.</text>
</comment>
<comment type="similarity">
    <text evidence="5">Belongs to the DEAD box helicase family. DDX56/DBP9 subfamily.</text>
</comment>
<gene>
    <name type="primary">DBP9</name>
    <name type="ordered locus">AGR278C</name>
</gene>
<proteinExistence type="inferred from homology"/>